<proteinExistence type="evidence at protein level"/>
<accession>P0DQY4</accession>
<reference key="1">
    <citation type="journal article" date="2022" name="Molecules">
        <title>Anti-ovarian cancer conotoxins identified from Conus venom.</title>
        <authorList>
            <person name="Ju S."/>
            <person name="Zhang Y."/>
            <person name="Guo X."/>
            <person name="Yan Q."/>
            <person name="Liu S."/>
            <person name="Ma B."/>
            <person name="Zhang M."/>
            <person name="Bao J."/>
            <person name="Luo S."/>
            <person name="Fu Y."/>
        </authorList>
    </citation>
    <scope>PROTEIN SEQUENCE</scope>
    <scope>IDENTIFICATION BY MASS SPECTROMETRY</scope>
    <scope>SUBCELLULAR LOCATION</scope>
    <source>
        <tissue>Venom</tissue>
    </source>
</reference>
<dbReference type="GO" id="GO:0005576">
    <property type="term" value="C:extracellular region"/>
    <property type="evidence" value="ECO:0007669"/>
    <property type="project" value="UniProtKB-SubCell"/>
</dbReference>
<organism>
    <name type="scientific">Conus virgo</name>
    <name type="common">Virgin cone</name>
    <dbReference type="NCBI Taxonomy" id="89427"/>
    <lineage>
        <taxon>Eukaryota</taxon>
        <taxon>Metazoa</taxon>
        <taxon>Spiralia</taxon>
        <taxon>Lophotrochozoa</taxon>
        <taxon>Mollusca</taxon>
        <taxon>Gastropoda</taxon>
        <taxon>Caenogastropoda</taxon>
        <taxon>Neogastropoda</taxon>
        <taxon>Conoidea</taxon>
        <taxon>Conidae</taxon>
        <taxon>Conus</taxon>
        <taxon>Virgiconus</taxon>
    </lineage>
</organism>
<keyword id="KW-0903">Direct protein sequencing</keyword>
<keyword id="KW-0964">Secreted</keyword>
<feature type="peptide" id="PRO_0000457916" description="Conopeptide Vi002" evidence="1">
    <location>
        <begin position="1"/>
        <end position="30"/>
    </location>
</feature>
<feature type="unsure residue" description="L or I" evidence="4">
    <location>
        <position position="1"/>
    </location>
</feature>
<feature type="unsure residue" description="L or I" evidence="4">
    <location>
        <position position="8"/>
    </location>
</feature>
<feature type="unsure residue" description="L or I" evidence="4">
    <location>
        <position position="14"/>
    </location>
</feature>
<feature type="unsure residue" description="L or I" evidence="4">
    <location>
        <position position="21"/>
    </location>
</feature>
<protein>
    <recommendedName>
        <fullName evidence="2">Conopeptide Vi002</fullName>
    </recommendedName>
</protein>
<sequence length="30" mass="2944">LSSGATALSGVPRLTKPAGRLTTTTVAVAF</sequence>
<evidence type="ECO:0000269" key="1">
    <source>
    </source>
</evidence>
<evidence type="ECO:0000303" key="2">
    <source>
    </source>
</evidence>
<evidence type="ECO:0000305" key="3"/>
<evidence type="ECO:0000305" key="4">
    <source>
    </source>
</evidence>
<comment type="subcellular location">
    <subcellularLocation>
        <location evidence="1">Secreted</location>
    </subcellularLocation>
</comment>
<comment type="tissue specificity">
    <text evidence="4">Expressed by the venom gland.</text>
</comment>
<comment type="miscellaneous">
    <text evidence="3">The mature peptide does not contain cysteine residue.</text>
</comment>
<name>CU02_CONVR</name>